<sequence>TGSCCGPTFSSLSCGGGCLQPRYYRDPCCCRPVSCQTTVSRPVTFVSRCTRPICEPCRRPVCCDPCSLQEGCCRPITCCPTSCQAVVCRPCCWATTCCQPVSVQCPCCRPTSCQPAPCSRTTCRTFRTSPCC</sequence>
<keyword id="KW-0903">Direct protein sequencing</keyword>
<keyword id="KW-0416">Keratin</keyword>
<keyword id="KW-1185">Reference proteome</keyword>
<protein>
    <recommendedName>
        <fullName>Keratin, high-sulfur matrix protein, IIIA3</fullName>
    </recommendedName>
    <alternativeName>
        <fullName>M2.6 protein</fullName>
    </alternativeName>
</protein>
<feature type="chain" id="PRO_0000084321" description="Keratin, high-sulfur matrix protein, IIIA3">
    <location>
        <begin position="1"/>
        <end position="132"/>
    </location>
</feature>
<feature type="sequence variant" description="In minor component.">
    <original>Y</original>
    <variation>C</variation>
    <location>
        <position position="23"/>
    </location>
</feature>
<feature type="sequence variant" description="In minor component.">
    <location>
        <position position="119"/>
    </location>
</feature>
<reference key="1">
    <citation type="journal article" date="1975" name="J. S. Afr. Chem. Inst.">
        <title>Studies on the high-sulphur proteins of reduced mohair. The isolation and the amino acid sequence of protein SCMKB-M2.6.</title>
        <authorList>
            <person name="Joubert F.J."/>
        </authorList>
    </citation>
    <scope>PROTEIN SEQUENCE</scope>
    <source>
        <strain>South African angora</strain>
    </source>
</reference>
<organism>
    <name type="scientific">Capra hircus</name>
    <name type="common">Goat</name>
    <dbReference type="NCBI Taxonomy" id="9925"/>
    <lineage>
        <taxon>Eukaryota</taxon>
        <taxon>Metazoa</taxon>
        <taxon>Chordata</taxon>
        <taxon>Craniata</taxon>
        <taxon>Vertebrata</taxon>
        <taxon>Euteleostomi</taxon>
        <taxon>Mammalia</taxon>
        <taxon>Eutheria</taxon>
        <taxon>Laurasiatheria</taxon>
        <taxon>Artiodactyla</taxon>
        <taxon>Ruminantia</taxon>
        <taxon>Pecora</taxon>
        <taxon>Bovidae</taxon>
        <taxon>Caprinae</taxon>
        <taxon>Capra</taxon>
    </lineage>
</organism>
<dbReference type="PIR" id="A92978">
    <property type="entry name" value="KRGT3J"/>
</dbReference>
<dbReference type="PIR" id="B92978">
    <property type="entry name" value="KRGT3M"/>
</dbReference>
<dbReference type="STRING" id="9925.ENSCHIP00000004593"/>
<dbReference type="Proteomes" id="UP000291000">
    <property type="component" value="Unassembled WGS sequence"/>
</dbReference>
<dbReference type="Proteomes" id="UP000694566">
    <property type="component" value="Unplaced"/>
</dbReference>
<dbReference type="GO" id="GO:0005829">
    <property type="term" value="C:cytosol"/>
    <property type="evidence" value="ECO:0007669"/>
    <property type="project" value="UniProtKB-ARBA"/>
</dbReference>
<dbReference type="GO" id="GO:0045095">
    <property type="term" value="C:keratin filament"/>
    <property type="evidence" value="ECO:0007669"/>
    <property type="project" value="InterPro"/>
</dbReference>
<dbReference type="InterPro" id="IPR002494">
    <property type="entry name" value="KAP"/>
</dbReference>
<dbReference type="InterPro" id="IPR052154">
    <property type="entry name" value="KRTAP_type_2-like"/>
</dbReference>
<dbReference type="PANTHER" id="PTHR48425">
    <property type="entry name" value="KERATIN-ASSOCIATED PROTEIN 2-1"/>
    <property type="match status" value="1"/>
</dbReference>
<dbReference type="PANTHER" id="PTHR48425:SF1">
    <property type="entry name" value="KERATIN-ASSOCIATED PROTEIN 2-1"/>
    <property type="match status" value="1"/>
</dbReference>
<dbReference type="Pfam" id="PF01500">
    <property type="entry name" value="Keratin_B2"/>
    <property type="match status" value="2"/>
</dbReference>
<name>KRA3_CAPHI</name>
<comment type="function">
    <text>The keratin products of mammalian epidermal derivatives such as wool and hair consist of microfibrils embedded in a rigid matrix of other proteins. The matrix proteins include the high-sulfur and high-tyrosine keratins, having molecular weights of 6-20 kDa, whereas the microfibrils contain the larger, low-sulfur keratins (40-56 kDa).</text>
</comment>
<accession>P02442</accession>
<proteinExistence type="evidence at protein level"/>